<feature type="chain" id="PRO_1000026045" description="Thiazole synthase">
    <location>
        <begin position="1"/>
        <end position="254"/>
    </location>
</feature>
<feature type="active site" description="Schiff-base intermediate with DXP" evidence="1">
    <location>
        <position position="95"/>
    </location>
</feature>
<feature type="binding site" evidence="1">
    <location>
        <position position="156"/>
    </location>
    <ligand>
        <name>1-deoxy-D-xylulose 5-phosphate</name>
        <dbReference type="ChEBI" id="CHEBI:57792"/>
    </ligand>
</feature>
<feature type="binding site" evidence="1">
    <location>
        <begin position="182"/>
        <end position="183"/>
    </location>
    <ligand>
        <name>1-deoxy-D-xylulose 5-phosphate</name>
        <dbReference type="ChEBI" id="CHEBI:57792"/>
    </ligand>
</feature>
<feature type="binding site" evidence="1">
    <location>
        <begin position="204"/>
        <end position="205"/>
    </location>
    <ligand>
        <name>1-deoxy-D-xylulose 5-phosphate</name>
        <dbReference type="ChEBI" id="CHEBI:57792"/>
    </ligand>
</feature>
<reference key="1">
    <citation type="submission" date="2007-04" db="EMBL/GenBank/DDBJ databases">
        <title>Complete sequence of Shewanella putrefaciens CN-32.</title>
        <authorList>
            <consortium name="US DOE Joint Genome Institute"/>
            <person name="Copeland A."/>
            <person name="Lucas S."/>
            <person name="Lapidus A."/>
            <person name="Barry K."/>
            <person name="Detter J.C."/>
            <person name="Glavina del Rio T."/>
            <person name="Hammon N."/>
            <person name="Israni S."/>
            <person name="Dalin E."/>
            <person name="Tice H."/>
            <person name="Pitluck S."/>
            <person name="Chain P."/>
            <person name="Malfatti S."/>
            <person name="Shin M."/>
            <person name="Vergez L."/>
            <person name="Schmutz J."/>
            <person name="Larimer F."/>
            <person name="Land M."/>
            <person name="Hauser L."/>
            <person name="Kyrpides N."/>
            <person name="Mikhailova N."/>
            <person name="Romine M.F."/>
            <person name="Fredrickson J."/>
            <person name="Tiedje J."/>
            <person name="Richardson P."/>
        </authorList>
    </citation>
    <scope>NUCLEOTIDE SEQUENCE [LARGE SCALE GENOMIC DNA]</scope>
    <source>
        <strain>CN-32 / ATCC BAA-453</strain>
    </source>
</reference>
<sequence length="254" mass="27250">MLKIADVEFESRLFTGTGKFSNSQVMIEAIMASKSQLVTVAMKRIDFKMGLDDLLTPLRQAGVRLLPNTSGARNAKEAVFAAELAREMLGTHWIKLEIHPDPKYLMPDAIETLEAARILCEKGFIVLPYVHADPVLCRRLEEVGCAAVMPLASPIGSNQGLVTESFLKIIIEQARVPVVIDAGIGAPSQAARAMELGADAVLVNTAIASSASPIVMAECFKEAVQCGRRAFEAGLGRVQTGAVQTSPLTGFLNQ</sequence>
<gene>
    <name evidence="1" type="primary">thiG</name>
    <name type="ordered locus">Sputcn32_1926</name>
</gene>
<keyword id="KW-0963">Cytoplasm</keyword>
<keyword id="KW-0704">Schiff base</keyword>
<keyword id="KW-0784">Thiamine biosynthesis</keyword>
<keyword id="KW-0808">Transferase</keyword>
<evidence type="ECO:0000255" key="1">
    <source>
        <dbReference type="HAMAP-Rule" id="MF_00443"/>
    </source>
</evidence>
<accession>A4Y6R6</accession>
<dbReference type="EC" id="2.8.1.10" evidence="1"/>
<dbReference type="EMBL" id="CP000681">
    <property type="protein sequence ID" value="ABP75649.1"/>
    <property type="molecule type" value="Genomic_DNA"/>
</dbReference>
<dbReference type="SMR" id="A4Y6R6"/>
<dbReference type="STRING" id="319224.Sputcn32_1926"/>
<dbReference type="KEGG" id="spc:Sputcn32_1926"/>
<dbReference type="eggNOG" id="COG2022">
    <property type="taxonomic scope" value="Bacteria"/>
</dbReference>
<dbReference type="HOGENOM" id="CLU_062233_1_0_6"/>
<dbReference type="UniPathway" id="UPA00060"/>
<dbReference type="GO" id="GO:0005737">
    <property type="term" value="C:cytoplasm"/>
    <property type="evidence" value="ECO:0007669"/>
    <property type="project" value="UniProtKB-SubCell"/>
</dbReference>
<dbReference type="GO" id="GO:1990107">
    <property type="term" value="F:thiazole synthase activity"/>
    <property type="evidence" value="ECO:0007669"/>
    <property type="project" value="UniProtKB-EC"/>
</dbReference>
<dbReference type="GO" id="GO:0009229">
    <property type="term" value="P:thiamine diphosphate biosynthetic process"/>
    <property type="evidence" value="ECO:0007669"/>
    <property type="project" value="UniProtKB-UniRule"/>
</dbReference>
<dbReference type="CDD" id="cd04728">
    <property type="entry name" value="ThiG"/>
    <property type="match status" value="1"/>
</dbReference>
<dbReference type="FunFam" id="3.20.20.70:FF:000049">
    <property type="entry name" value="Thiazole synthase"/>
    <property type="match status" value="1"/>
</dbReference>
<dbReference type="Gene3D" id="3.20.20.70">
    <property type="entry name" value="Aldolase class I"/>
    <property type="match status" value="1"/>
</dbReference>
<dbReference type="HAMAP" id="MF_00443">
    <property type="entry name" value="ThiG"/>
    <property type="match status" value="1"/>
</dbReference>
<dbReference type="InterPro" id="IPR013785">
    <property type="entry name" value="Aldolase_TIM"/>
</dbReference>
<dbReference type="InterPro" id="IPR033983">
    <property type="entry name" value="Thiazole_synthase_ThiG"/>
</dbReference>
<dbReference type="InterPro" id="IPR008867">
    <property type="entry name" value="ThiG"/>
</dbReference>
<dbReference type="PANTHER" id="PTHR34266">
    <property type="entry name" value="THIAZOLE SYNTHASE"/>
    <property type="match status" value="1"/>
</dbReference>
<dbReference type="PANTHER" id="PTHR34266:SF2">
    <property type="entry name" value="THIAZOLE SYNTHASE"/>
    <property type="match status" value="1"/>
</dbReference>
<dbReference type="Pfam" id="PF05690">
    <property type="entry name" value="ThiG"/>
    <property type="match status" value="1"/>
</dbReference>
<dbReference type="SUPFAM" id="SSF110399">
    <property type="entry name" value="ThiG-like"/>
    <property type="match status" value="1"/>
</dbReference>
<protein>
    <recommendedName>
        <fullName evidence="1">Thiazole synthase</fullName>
        <ecNumber evidence="1">2.8.1.10</ecNumber>
    </recommendedName>
</protein>
<name>THIG_SHEPC</name>
<proteinExistence type="inferred from homology"/>
<comment type="function">
    <text evidence="1">Catalyzes the rearrangement of 1-deoxy-D-xylulose 5-phosphate (DXP) to produce the thiazole phosphate moiety of thiamine. Sulfur is provided by the thiocarboxylate moiety of the carrier protein ThiS. In vitro, sulfur can be provided by H(2)S.</text>
</comment>
<comment type="catalytic activity">
    <reaction evidence="1">
        <text>[ThiS sulfur-carrier protein]-C-terminal-Gly-aminoethanethioate + 2-iminoacetate + 1-deoxy-D-xylulose 5-phosphate = [ThiS sulfur-carrier protein]-C-terminal Gly-Gly + 2-[(2R,5Z)-2-carboxy-4-methylthiazol-5(2H)-ylidene]ethyl phosphate + 2 H2O + H(+)</text>
        <dbReference type="Rhea" id="RHEA:26297"/>
        <dbReference type="Rhea" id="RHEA-COMP:12909"/>
        <dbReference type="Rhea" id="RHEA-COMP:19908"/>
        <dbReference type="ChEBI" id="CHEBI:15377"/>
        <dbReference type="ChEBI" id="CHEBI:15378"/>
        <dbReference type="ChEBI" id="CHEBI:57792"/>
        <dbReference type="ChEBI" id="CHEBI:62899"/>
        <dbReference type="ChEBI" id="CHEBI:77846"/>
        <dbReference type="ChEBI" id="CHEBI:90778"/>
        <dbReference type="ChEBI" id="CHEBI:232372"/>
        <dbReference type="EC" id="2.8.1.10"/>
    </reaction>
</comment>
<comment type="pathway">
    <text evidence="1">Cofactor biosynthesis; thiamine diphosphate biosynthesis.</text>
</comment>
<comment type="subunit">
    <text evidence="1">Homotetramer. Forms heterodimers with either ThiH or ThiS.</text>
</comment>
<comment type="subcellular location">
    <subcellularLocation>
        <location evidence="1">Cytoplasm</location>
    </subcellularLocation>
</comment>
<comment type="similarity">
    <text evidence="1">Belongs to the ThiG family.</text>
</comment>
<organism>
    <name type="scientific">Shewanella putrefaciens (strain CN-32 / ATCC BAA-453)</name>
    <dbReference type="NCBI Taxonomy" id="319224"/>
    <lineage>
        <taxon>Bacteria</taxon>
        <taxon>Pseudomonadati</taxon>
        <taxon>Pseudomonadota</taxon>
        <taxon>Gammaproteobacteria</taxon>
        <taxon>Alteromonadales</taxon>
        <taxon>Shewanellaceae</taxon>
        <taxon>Shewanella</taxon>
    </lineage>
</organism>